<dbReference type="EMBL" id="AP009351">
    <property type="protein sequence ID" value="BAF66629.1"/>
    <property type="molecule type" value="Genomic_DNA"/>
</dbReference>
<dbReference type="RefSeq" id="WP_001261460.1">
    <property type="nucleotide sequence ID" value="NZ_JBBIAE010000011.1"/>
</dbReference>
<dbReference type="SMR" id="A6QE47"/>
<dbReference type="GeneID" id="98344691"/>
<dbReference type="KEGG" id="sae:NWMN_0357"/>
<dbReference type="HOGENOM" id="CLU_113441_5_3_9"/>
<dbReference type="Proteomes" id="UP000006386">
    <property type="component" value="Chromosome"/>
</dbReference>
<dbReference type="GO" id="GO:0005737">
    <property type="term" value="C:cytoplasm"/>
    <property type="evidence" value="ECO:0007669"/>
    <property type="project" value="UniProtKB-ARBA"/>
</dbReference>
<dbReference type="GO" id="GO:1990904">
    <property type="term" value="C:ribonucleoprotein complex"/>
    <property type="evidence" value="ECO:0007669"/>
    <property type="project" value="UniProtKB-KW"/>
</dbReference>
<dbReference type="GO" id="GO:0005840">
    <property type="term" value="C:ribosome"/>
    <property type="evidence" value="ECO:0007669"/>
    <property type="project" value="UniProtKB-KW"/>
</dbReference>
<dbReference type="GO" id="GO:0070181">
    <property type="term" value="F:small ribosomal subunit rRNA binding"/>
    <property type="evidence" value="ECO:0007669"/>
    <property type="project" value="TreeGrafter"/>
</dbReference>
<dbReference type="GO" id="GO:0003735">
    <property type="term" value="F:structural constituent of ribosome"/>
    <property type="evidence" value="ECO:0007669"/>
    <property type="project" value="InterPro"/>
</dbReference>
<dbReference type="GO" id="GO:0006412">
    <property type="term" value="P:translation"/>
    <property type="evidence" value="ECO:0007669"/>
    <property type="project" value="UniProtKB-UniRule"/>
</dbReference>
<dbReference type="CDD" id="cd00473">
    <property type="entry name" value="bS6"/>
    <property type="match status" value="1"/>
</dbReference>
<dbReference type="FunFam" id="3.30.70.60:FF:000002">
    <property type="entry name" value="30S ribosomal protein S6"/>
    <property type="match status" value="1"/>
</dbReference>
<dbReference type="Gene3D" id="3.30.70.60">
    <property type="match status" value="1"/>
</dbReference>
<dbReference type="HAMAP" id="MF_00360">
    <property type="entry name" value="Ribosomal_bS6"/>
    <property type="match status" value="1"/>
</dbReference>
<dbReference type="InterPro" id="IPR000529">
    <property type="entry name" value="Ribosomal_bS6"/>
</dbReference>
<dbReference type="InterPro" id="IPR020815">
    <property type="entry name" value="Ribosomal_bS6_CS"/>
</dbReference>
<dbReference type="InterPro" id="IPR035980">
    <property type="entry name" value="Ribosomal_bS6_sf"/>
</dbReference>
<dbReference type="InterPro" id="IPR020814">
    <property type="entry name" value="Ribosomal_S6_plastid/chlpt"/>
</dbReference>
<dbReference type="InterPro" id="IPR014717">
    <property type="entry name" value="Transl_elong_EF1B/ribsomal_bS6"/>
</dbReference>
<dbReference type="NCBIfam" id="TIGR00166">
    <property type="entry name" value="S6"/>
    <property type="match status" value="1"/>
</dbReference>
<dbReference type="PANTHER" id="PTHR21011">
    <property type="entry name" value="MITOCHONDRIAL 28S RIBOSOMAL PROTEIN S6"/>
    <property type="match status" value="1"/>
</dbReference>
<dbReference type="PANTHER" id="PTHR21011:SF1">
    <property type="entry name" value="SMALL RIBOSOMAL SUBUNIT PROTEIN BS6M"/>
    <property type="match status" value="1"/>
</dbReference>
<dbReference type="Pfam" id="PF01250">
    <property type="entry name" value="Ribosomal_S6"/>
    <property type="match status" value="1"/>
</dbReference>
<dbReference type="SUPFAM" id="SSF54995">
    <property type="entry name" value="Ribosomal protein S6"/>
    <property type="match status" value="1"/>
</dbReference>
<dbReference type="PROSITE" id="PS01048">
    <property type="entry name" value="RIBOSOMAL_S6"/>
    <property type="match status" value="1"/>
</dbReference>
<sequence length="98" mass="11595">MRTYEVMYIVRPNIEEDAKKALVERFNGILATEGAEVLEAKDWGKRRLAYEINDFKDGFYNIVRVKSDNNKATDEFQRLAKISDDIIRYMVIREDEDK</sequence>
<keyword id="KW-0687">Ribonucleoprotein</keyword>
<keyword id="KW-0689">Ribosomal protein</keyword>
<keyword id="KW-0694">RNA-binding</keyword>
<keyword id="KW-0699">rRNA-binding</keyword>
<evidence type="ECO:0000255" key="1">
    <source>
        <dbReference type="HAMAP-Rule" id="MF_00360"/>
    </source>
</evidence>
<evidence type="ECO:0000305" key="2"/>
<protein>
    <recommendedName>
        <fullName evidence="1">Small ribosomal subunit protein bS6</fullName>
    </recommendedName>
    <alternativeName>
        <fullName evidence="2">30S ribosomal protein S6</fullName>
    </alternativeName>
</protein>
<proteinExistence type="inferred from homology"/>
<accession>A6QE47</accession>
<organism>
    <name type="scientific">Staphylococcus aureus (strain Newman)</name>
    <dbReference type="NCBI Taxonomy" id="426430"/>
    <lineage>
        <taxon>Bacteria</taxon>
        <taxon>Bacillati</taxon>
        <taxon>Bacillota</taxon>
        <taxon>Bacilli</taxon>
        <taxon>Bacillales</taxon>
        <taxon>Staphylococcaceae</taxon>
        <taxon>Staphylococcus</taxon>
    </lineage>
</organism>
<comment type="function">
    <text evidence="1">Binds together with bS18 to 16S ribosomal RNA.</text>
</comment>
<comment type="similarity">
    <text evidence="1">Belongs to the bacterial ribosomal protein bS6 family.</text>
</comment>
<reference key="1">
    <citation type="journal article" date="2008" name="J. Bacteriol.">
        <title>Genome sequence of Staphylococcus aureus strain Newman and comparative analysis of staphylococcal genomes: polymorphism and evolution of two major pathogenicity islands.</title>
        <authorList>
            <person name="Baba T."/>
            <person name="Bae T."/>
            <person name="Schneewind O."/>
            <person name="Takeuchi F."/>
            <person name="Hiramatsu K."/>
        </authorList>
    </citation>
    <scope>NUCLEOTIDE SEQUENCE [LARGE SCALE GENOMIC DNA]</scope>
    <source>
        <strain>Newman</strain>
    </source>
</reference>
<name>RS6_STAAE</name>
<gene>
    <name evidence="1" type="primary">rpsF</name>
    <name type="ordered locus">NWMN_0357</name>
</gene>
<feature type="chain" id="PRO_1000079471" description="Small ribosomal subunit protein bS6">
    <location>
        <begin position="1"/>
        <end position="98"/>
    </location>
</feature>